<evidence type="ECO:0000255" key="1">
    <source>
        <dbReference type="HAMAP-Rule" id="MF_00759"/>
    </source>
</evidence>
<gene>
    <name evidence="1" type="primary">mutH</name>
    <name type="ordered locus">HS_1550</name>
</gene>
<protein>
    <recommendedName>
        <fullName evidence="1">DNA mismatch repair protein MutH</fullName>
    </recommendedName>
    <alternativeName>
        <fullName evidence="1">Methyl-directed mismatch repair protein</fullName>
    </alternativeName>
</protein>
<keyword id="KW-0963">Cytoplasm</keyword>
<keyword id="KW-0227">DNA damage</keyword>
<keyword id="KW-0234">DNA repair</keyword>
<keyword id="KW-0255">Endonuclease</keyword>
<keyword id="KW-0378">Hydrolase</keyword>
<keyword id="KW-0540">Nuclease</keyword>
<name>MUTH_HISS1</name>
<feature type="chain" id="PRO_1000148400" description="DNA mismatch repair protein MutH">
    <location>
        <begin position="1"/>
        <end position="224"/>
    </location>
</feature>
<sequence>MTALTPPQYEAELLQRAKSIAGLTFAELAEELNLVVPPDLKRDKGWVGMLIETALGATAGSKAEQDFSHLGIELKTIPVNQQGYPLETTFVSLAPLAQNSGVTWHSSHVRYKLSKVLWIPIEGERQIPLAERHVGVPILWQPSSSQEQRLRQDWEELMDYIVLGKLTEITARIGEVLQLRPKGANSRALTKGIGKNGEIIDTLPLGFYLRKEFTAEILHDFLMD</sequence>
<accession>Q0I5D2</accession>
<dbReference type="EMBL" id="CP000436">
    <property type="protein sequence ID" value="ABI25818.1"/>
    <property type="molecule type" value="Genomic_DNA"/>
</dbReference>
<dbReference type="SMR" id="Q0I5D2"/>
<dbReference type="KEGG" id="hso:HS_1550"/>
<dbReference type="eggNOG" id="COG3066">
    <property type="taxonomic scope" value="Bacteria"/>
</dbReference>
<dbReference type="HOGENOM" id="CLU_086669_0_0_6"/>
<dbReference type="GO" id="GO:0005737">
    <property type="term" value="C:cytoplasm"/>
    <property type="evidence" value="ECO:0007669"/>
    <property type="project" value="UniProtKB-SubCell"/>
</dbReference>
<dbReference type="GO" id="GO:0003677">
    <property type="term" value="F:DNA binding"/>
    <property type="evidence" value="ECO:0007669"/>
    <property type="project" value="InterPro"/>
</dbReference>
<dbReference type="GO" id="GO:0004519">
    <property type="term" value="F:endonuclease activity"/>
    <property type="evidence" value="ECO:0007669"/>
    <property type="project" value="UniProtKB-UniRule"/>
</dbReference>
<dbReference type="GO" id="GO:0006304">
    <property type="term" value="P:DNA modification"/>
    <property type="evidence" value="ECO:0007669"/>
    <property type="project" value="InterPro"/>
</dbReference>
<dbReference type="GO" id="GO:0006298">
    <property type="term" value="P:mismatch repair"/>
    <property type="evidence" value="ECO:0007669"/>
    <property type="project" value="UniProtKB-UniRule"/>
</dbReference>
<dbReference type="CDD" id="cd00583">
    <property type="entry name" value="MutH-like"/>
    <property type="match status" value="1"/>
</dbReference>
<dbReference type="Gene3D" id="3.40.600.10">
    <property type="entry name" value="DNA mismatch repair MutH/Restriction endonuclease, type II"/>
    <property type="match status" value="1"/>
</dbReference>
<dbReference type="HAMAP" id="MF_00759">
    <property type="entry name" value="MutH"/>
    <property type="match status" value="1"/>
</dbReference>
<dbReference type="InterPro" id="IPR004230">
    <property type="entry name" value="DNA_mismatch_repair_MutH"/>
</dbReference>
<dbReference type="InterPro" id="IPR011337">
    <property type="entry name" value="DNA_rep_MutH/RE_typeII_Sau3AI"/>
</dbReference>
<dbReference type="InterPro" id="IPR037057">
    <property type="entry name" value="DNA_rep_MutH/T2_RE_sf"/>
</dbReference>
<dbReference type="InterPro" id="IPR011335">
    <property type="entry name" value="Restrct_endonuc-II-like"/>
</dbReference>
<dbReference type="NCBIfam" id="TIGR02248">
    <property type="entry name" value="mutH_TIGR"/>
    <property type="match status" value="1"/>
</dbReference>
<dbReference type="NCBIfam" id="NF003458">
    <property type="entry name" value="PRK05070.1"/>
    <property type="match status" value="1"/>
</dbReference>
<dbReference type="Pfam" id="PF02976">
    <property type="entry name" value="MutH"/>
    <property type="match status" value="1"/>
</dbReference>
<dbReference type="SMART" id="SM00927">
    <property type="entry name" value="MutH"/>
    <property type="match status" value="1"/>
</dbReference>
<dbReference type="SUPFAM" id="SSF52980">
    <property type="entry name" value="Restriction endonuclease-like"/>
    <property type="match status" value="1"/>
</dbReference>
<organism>
    <name type="scientific">Histophilus somni (strain 129Pt)</name>
    <name type="common">Haemophilus somnus</name>
    <dbReference type="NCBI Taxonomy" id="205914"/>
    <lineage>
        <taxon>Bacteria</taxon>
        <taxon>Pseudomonadati</taxon>
        <taxon>Pseudomonadota</taxon>
        <taxon>Gammaproteobacteria</taxon>
        <taxon>Pasteurellales</taxon>
        <taxon>Pasteurellaceae</taxon>
        <taxon>Histophilus</taxon>
    </lineage>
</organism>
<reference key="1">
    <citation type="journal article" date="2007" name="J. Bacteriol.">
        <title>Complete genome sequence of Haemophilus somnus (Histophilus somni) strain 129Pt and comparison to Haemophilus ducreyi 35000HP and Haemophilus influenzae Rd.</title>
        <authorList>
            <person name="Challacombe J.F."/>
            <person name="Duncan A.J."/>
            <person name="Brettin T.S."/>
            <person name="Bruce D."/>
            <person name="Chertkov O."/>
            <person name="Detter J.C."/>
            <person name="Han C.S."/>
            <person name="Misra M."/>
            <person name="Richardson P."/>
            <person name="Tapia R."/>
            <person name="Thayer N."/>
            <person name="Xie G."/>
            <person name="Inzana T.J."/>
        </authorList>
    </citation>
    <scope>NUCLEOTIDE SEQUENCE [LARGE SCALE GENOMIC DNA]</scope>
    <source>
        <strain>129Pt</strain>
    </source>
</reference>
<proteinExistence type="inferred from homology"/>
<comment type="function">
    <text evidence="1">Sequence-specific endonuclease that cleaves unmethylated GATC sequences. It is involved in DNA mismatch repair.</text>
</comment>
<comment type="subcellular location">
    <subcellularLocation>
        <location evidence="1">Cytoplasm</location>
    </subcellularLocation>
</comment>
<comment type="similarity">
    <text evidence="1">Belongs to the MutH family.</text>
</comment>